<protein>
    <recommendedName>
        <fullName evidence="1">Oxygen-dependent coproporphyrinogen-III oxidase</fullName>
        <shortName evidence="1">CPO</shortName>
        <shortName evidence="1">Coprogen oxidase</shortName>
        <shortName evidence="1">Coproporphyrinogenase</shortName>
        <ecNumber evidence="1">1.3.3.3</ecNumber>
    </recommendedName>
</protein>
<sequence length="299" mass="34289">MKPDAHQVKQFLLNLQDTICQQLTAVDGAEFVEDSWQREGGGGGRSRVLRNGGVFEQAGVNFSHVHGEAMPASATAHRPELAGRSFEAMGVSLVVHPHNPYVPTSHANVRFFIAEKPGAEPVWWFGGGFDLTPFYGFEEDAIHWHRTARDLCLPFGKDVYPRYKKWCDDYFYLKHRNEQRGIGGLFFDDLNTPDFDHCFAFMQAVGKGYTDAYLPIVERRKAMAYGERERNFQLYRRGRYVEFNLVWDRGTLFGLQTGGRTESILMSMPPLVRWEYDYQPKDGSPEAALSEFIKVRDWV</sequence>
<keyword id="KW-0963">Cytoplasm</keyword>
<keyword id="KW-0350">Heme biosynthesis</keyword>
<keyword id="KW-0464">Manganese</keyword>
<keyword id="KW-0479">Metal-binding</keyword>
<keyword id="KW-0560">Oxidoreductase</keyword>
<keyword id="KW-0627">Porphyrin biosynthesis</keyword>
<keyword id="KW-1185">Reference proteome</keyword>
<dbReference type="EC" id="1.3.3.3" evidence="1"/>
<dbReference type="EMBL" id="AE005174">
    <property type="protein sequence ID" value="AAG57554.1"/>
    <property type="molecule type" value="Genomic_DNA"/>
</dbReference>
<dbReference type="EMBL" id="BA000007">
    <property type="protein sequence ID" value="BAB36730.1"/>
    <property type="molecule type" value="Genomic_DNA"/>
</dbReference>
<dbReference type="PIR" id="C91042">
    <property type="entry name" value="C91042"/>
</dbReference>
<dbReference type="PIR" id="F85886">
    <property type="entry name" value="F85886"/>
</dbReference>
<dbReference type="RefSeq" id="NP_311334.1">
    <property type="nucleotide sequence ID" value="NC_002695.1"/>
</dbReference>
<dbReference type="RefSeq" id="WP_000801382.1">
    <property type="nucleotide sequence ID" value="NZ_VOAI01000001.1"/>
</dbReference>
<dbReference type="SMR" id="Q8XBI4"/>
<dbReference type="STRING" id="155864.Z3701"/>
<dbReference type="GeneID" id="915300"/>
<dbReference type="KEGG" id="ece:Z3701"/>
<dbReference type="KEGG" id="ecs:ECs_3307"/>
<dbReference type="PATRIC" id="fig|386585.9.peg.3454"/>
<dbReference type="eggNOG" id="COG0408">
    <property type="taxonomic scope" value="Bacteria"/>
</dbReference>
<dbReference type="HOGENOM" id="CLU_026169_0_1_6"/>
<dbReference type="OMA" id="VHANWRY"/>
<dbReference type="UniPathway" id="UPA00251">
    <property type="reaction ID" value="UER00322"/>
</dbReference>
<dbReference type="Proteomes" id="UP000000558">
    <property type="component" value="Chromosome"/>
</dbReference>
<dbReference type="Proteomes" id="UP000002519">
    <property type="component" value="Chromosome"/>
</dbReference>
<dbReference type="GO" id="GO:0005737">
    <property type="term" value="C:cytoplasm"/>
    <property type="evidence" value="ECO:0007669"/>
    <property type="project" value="UniProtKB-SubCell"/>
</dbReference>
<dbReference type="GO" id="GO:0004109">
    <property type="term" value="F:coproporphyrinogen oxidase activity"/>
    <property type="evidence" value="ECO:0007669"/>
    <property type="project" value="UniProtKB-UniRule"/>
</dbReference>
<dbReference type="GO" id="GO:0030145">
    <property type="term" value="F:manganese ion binding"/>
    <property type="evidence" value="ECO:0007669"/>
    <property type="project" value="UniProtKB-UniRule"/>
</dbReference>
<dbReference type="GO" id="GO:0042803">
    <property type="term" value="F:protein homodimerization activity"/>
    <property type="evidence" value="ECO:0000250"/>
    <property type="project" value="UniProtKB"/>
</dbReference>
<dbReference type="GO" id="GO:0006782">
    <property type="term" value="P:protoporphyrinogen IX biosynthetic process"/>
    <property type="evidence" value="ECO:0007669"/>
    <property type="project" value="UniProtKB-UniRule"/>
</dbReference>
<dbReference type="FunFam" id="3.40.1500.10:FF:000001">
    <property type="entry name" value="Oxygen-dependent coproporphyrinogen-III oxidase"/>
    <property type="match status" value="1"/>
</dbReference>
<dbReference type="Gene3D" id="3.40.1500.10">
    <property type="entry name" value="Coproporphyrinogen III oxidase, aerobic"/>
    <property type="match status" value="1"/>
</dbReference>
<dbReference type="HAMAP" id="MF_00333">
    <property type="entry name" value="Coprogen_oxidas"/>
    <property type="match status" value="1"/>
</dbReference>
<dbReference type="InterPro" id="IPR001260">
    <property type="entry name" value="Coprogen_oxidase_aer"/>
</dbReference>
<dbReference type="InterPro" id="IPR036406">
    <property type="entry name" value="Coprogen_oxidase_aer_sf"/>
</dbReference>
<dbReference type="InterPro" id="IPR018375">
    <property type="entry name" value="Coprogen_oxidase_CS"/>
</dbReference>
<dbReference type="NCBIfam" id="NF003727">
    <property type="entry name" value="PRK05330.1"/>
    <property type="match status" value="1"/>
</dbReference>
<dbReference type="PANTHER" id="PTHR10755">
    <property type="entry name" value="COPROPORPHYRINOGEN III OXIDASE, MITOCHONDRIAL"/>
    <property type="match status" value="1"/>
</dbReference>
<dbReference type="PANTHER" id="PTHR10755:SF0">
    <property type="entry name" value="OXYGEN-DEPENDENT COPROPORPHYRINOGEN-III OXIDASE, MITOCHONDRIAL"/>
    <property type="match status" value="1"/>
</dbReference>
<dbReference type="Pfam" id="PF01218">
    <property type="entry name" value="Coprogen_oxidas"/>
    <property type="match status" value="1"/>
</dbReference>
<dbReference type="PIRSF" id="PIRSF000166">
    <property type="entry name" value="Coproporphyri_ox"/>
    <property type="match status" value="1"/>
</dbReference>
<dbReference type="PRINTS" id="PR00073">
    <property type="entry name" value="COPRGNOXDASE"/>
</dbReference>
<dbReference type="SUPFAM" id="SSF102886">
    <property type="entry name" value="Coproporphyrinogen III oxidase"/>
    <property type="match status" value="1"/>
</dbReference>
<dbReference type="PROSITE" id="PS01021">
    <property type="entry name" value="COPROGEN_OXIDASE"/>
    <property type="match status" value="1"/>
</dbReference>
<accession>Q8XBI4</accession>
<gene>
    <name evidence="1" type="primary">hemF</name>
    <name type="ordered locus">Z3701</name>
    <name type="ordered locus">ECs3307</name>
</gene>
<feature type="chain" id="PRO_0000109896" description="Oxygen-dependent coproporphyrinogen-III oxidase">
    <location>
        <begin position="1"/>
        <end position="299"/>
    </location>
</feature>
<feature type="region of interest" description="Important for dimerization" evidence="1">
    <location>
        <begin position="240"/>
        <end position="275"/>
    </location>
</feature>
<feature type="active site" description="Proton donor" evidence="1">
    <location>
        <position position="106"/>
    </location>
</feature>
<feature type="binding site" evidence="1">
    <location>
        <position position="92"/>
    </location>
    <ligand>
        <name>substrate</name>
    </ligand>
</feature>
<feature type="binding site" evidence="1">
    <location>
        <position position="96"/>
    </location>
    <ligand>
        <name>Mn(2+)</name>
        <dbReference type="ChEBI" id="CHEBI:29035"/>
    </ligand>
</feature>
<feature type="binding site" evidence="1">
    <location>
        <position position="106"/>
    </location>
    <ligand>
        <name>Mn(2+)</name>
        <dbReference type="ChEBI" id="CHEBI:29035"/>
    </ligand>
</feature>
<feature type="binding site" evidence="1">
    <location>
        <begin position="108"/>
        <end position="110"/>
    </location>
    <ligand>
        <name>substrate</name>
    </ligand>
</feature>
<feature type="binding site" evidence="1">
    <location>
        <position position="145"/>
    </location>
    <ligand>
        <name>Mn(2+)</name>
        <dbReference type="ChEBI" id="CHEBI:29035"/>
    </ligand>
</feature>
<feature type="binding site" evidence="1">
    <location>
        <position position="175"/>
    </location>
    <ligand>
        <name>Mn(2+)</name>
        <dbReference type="ChEBI" id="CHEBI:29035"/>
    </ligand>
</feature>
<feature type="binding site" evidence="1">
    <location>
        <begin position="258"/>
        <end position="260"/>
    </location>
    <ligand>
        <name>substrate</name>
    </ligand>
</feature>
<feature type="site" description="Important for dimerization" evidence="1">
    <location>
        <position position="175"/>
    </location>
</feature>
<proteinExistence type="inferred from homology"/>
<comment type="function">
    <text evidence="1">Involved in the heme biosynthesis. Catalyzes the aerobic oxidative decarboxylation of propionate groups of rings A and B of coproporphyrinogen-III to yield the vinyl groups in protoporphyrinogen-IX.</text>
</comment>
<comment type="catalytic activity">
    <reaction evidence="1">
        <text>coproporphyrinogen III + O2 + 2 H(+) = protoporphyrinogen IX + 2 CO2 + 2 H2O</text>
        <dbReference type="Rhea" id="RHEA:18257"/>
        <dbReference type="ChEBI" id="CHEBI:15377"/>
        <dbReference type="ChEBI" id="CHEBI:15378"/>
        <dbReference type="ChEBI" id="CHEBI:15379"/>
        <dbReference type="ChEBI" id="CHEBI:16526"/>
        <dbReference type="ChEBI" id="CHEBI:57307"/>
        <dbReference type="ChEBI" id="CHEBI:57309"/>
        <dbReference type="EC" id="1.3.3.3"/>
    </reaction>
</comment>
<comment type="cofactor">
    <cofactor evidence="1">
        <name>Mn(2+)</name>
        <dbReference type="ChEBI" id="CHEBI:29035"/>
    </cofactor>
</comment>
<comment type="pathway">
    <text evidence="1">Porphyrin-containing compound metabolism; protoporphyrin-IX biosynthesis; protoporphyrinogen-IX from coproporphyrinogen-III (O2 route): step 1/1.</text>
</comment>
<comment type="subunit">
    <text evidence="1">Homodimer.</text>
</comment>
<comment type="subcellular location">
    <subcellularLocation>
        <location evidence="1">Cytoplasm</location>
    </subcellularLocation>
</comment>
<comment type="similarity">
    <text evidence="1">Belongs to the aerobic coproporphyrinogen-III oxidase family.</text>
</comment>
<name>HEM6_ECO57</name>
<organism>
    <name type="scientific">Escherichia coli O157:H7</name>
    <dbReference type="NCBI Taxonomy" id="83334"/>
    <lineage>
        <taxon>Bacteria</taxon>
        <taxon>Pseudomonadati</taxon>
        <taxon>Pseudomonadota</taxon>
        <taxon>Gammaproteobacteria</taxon>
        <taxon>Enterobacterales</taxon>
        <taxon>Enterobacteriaceae</taxon>
        <taxon>Escherichia</taxon>
    </lineage>
</organism>
<reference key="1">
    <citation type="journal article" date="2001" name="Nature">
        <title>Genome sequence of enterohaemorrhagic Escherichia coli O157:H7.</title>
        <authorList>
            <person name="Perna N.T."/>
            <person name="Plunkett G. III"/>
            <person name="Burland V."/>
            <person name="Mau B."/>
            <person name="Glasner J.D."/>
            <person name="Rose D.J."/>
            <person name="Mayhew G.F."/>
            <person name="Evans P.S."/>
            <person name="Gregor J."/>
            <person name="Kirkpatrick H.A."/>
            <person name="Posfai G."/>
            <person name="Hackett J."/>
            <person name="Klink S."/>
            <person name="Boutin A."/>
            <person name="Shao Y."/>
            <person name="Miller L."/>
            <person name="Grotbeck E.J."/>
            <person name="Davis N.W."/>
            <person name="Lim A."/>
            <person name="Dimalanta E.T."/>
            <person name="Potamousis K."/>
            <person name="Apodaca J."/>
            <person name="Anantharaman T.S."/>
            <person name="Lin J."/>
            <person name="Yen G."/>
            <person name="Schwartz D.C."/>
            <person name="Welch R.A."/>
            <person name="Blattner F.R."/>
        </authorList>
    </citation>
    <scope>NUCLEOTIDE SEQUENCE [LARGE SCALE GENOMIC DNA]</scope>
    <source>
        <strain>O157:H7 / EDL933 / ATCC 700927 / EHEC</strain>
    </source>
</reference>
<reference key="2">
    <citation type="journal article" date="2001" name="DNA Res.">
        <title>Complete genome sequence of enterohemorrhagic Escherichia coli O157:H7 and genomic comparison with a laboratory strain K-12.</title>
        <authorList>
            <person name="Hayashi T."/>
            <person name="Makino K."/>
            <person name="Ohnishi M."/>
            <person name="Kurokawa K."/>
            <person name="Ishii K."/>
            <person name="Yokoyama K."/>
            <person name="Han C.-G."/>
            <person name="Ohtsubo E."/>
            <person name="Nakayama K."/>
            <person name="Murata T."/>
            <person name="Tanaka M."/>
            <person name="Tobe T."/>
            <person name="Iida T."/>
            <person name="Takami H."/>
            <person name="Honda T."/>
            <person name="Sasakawa C."/>
            <person name="Ogasawara N."/>
            <person name="Yasunaga T."/>
            <person name="Kuhara S."/>
            <person name="Shiba T."/>
            <person name="Hattori M."/>
            <person name="Shinagawa H."/>
        </authorList>
    </citation>
    <scope>NUCLEOTIDE SEQUENCE [LARGE SCALE GENOMIC DNA]</scope>
    <source>
        <strain>O157:H7 / Sakai / RIMD 0509952 / EHEC</strain>
    </source>
</reference>
<evidence type="ECO:0000255" key="1">
    <source>
        <dbReference type="HAMAP-Rule" id="MF_00333"/>
    </source>
</evidence>